<evidence type="ECO:0000255" key="1">
    <source>
        <dbReference type="HAMAP-Rule" id="MF_00362"/>
    </source>
</evidence>
<evidence type="ECO:0000305" key="2"/>
<comment type="function">
    <text evidence="1">Forms part of the ribosomal stalk, playing a central role in the interaction of the ribosome with GTP-bound translation factors.</text>
</comment>
<comment type="subunit">
    <text evidence="1">Part of the ribosomal stalk of the 50S ribosomal subunit. The N-terminus interacts with L11 and the large rRNA to form the base of the stalk. The C-terminus forms an elongated spine to which L12 dimers bind in a sequential fashion forming a multimeric L10(L12)X complex.</text>
</comment>
<comment type="similarity">
    <text evidence="1">Belongs to the universal ribosomal protein uL10 family.</text>
</comment>
<feature type="chain" id="PRO_1000195562" description="Large ribosomal subunit protein uL10">
    <location>
        <begin position="1"/>
        <end position="186"/>
    </location>
</feature>
<sequence>MAKPEKVSAVAEITEQFKGSTAAVITEYRGLTVGNITTLRRALGEGATYSVAKNTLVKRAAAEAGVEGLDDLFVGPTAIAFIKGEPVDAAKALKNFAKDNKALIIKGGYMDGAALSVDEVNKIADLESREILLAKLAGAMKGNLAKAAGLFNAPASQVARLAAALQEKKAAEGGAAEAPAEAAAES</sequence>
<proteinExistence type="inferred from homology"/>
<reference key="1">
    <citation type="submission" date="2009-03" db="EMBL/GenBank/DDBJ databases">
        <title>Comparison of the complete genome sequences of Rhodococcus erythropolis PR4 and Rhodococcus opacus B4.</title>
        <authorList>
            <person name="Takarada H."/>
            <person name="Sekine M."/>
            <person name="Hosoyama A."/>
            <person name="Yamada R."/>
            <person name="Fujisawa T."/>
            <person name="Omata S."/>
            <person name="Shimizu A."/>
            <person name="Tsukatani N."/>
            <person name="Tanikawa S."/>
            <person name="Fujita N."/>
            <person name="Harayama S."/>
        </authorList>
    </citation>
    <scope>NUCLEOTIDE SEQUENCE [LARGE SCALE GENOMIC DNA]</scope>
    <source>
        <strain>B4</strain>
    </source>
</reference>
<organism>
    <name type="scientific">Rhodococcus opacus (strain B4)</name>
    <dbReference type="NCBI Taxonomy" id="632772"/>
    <lineage>
        <taxon>Bacteria</taxon>
        <taxon>Bacillati</taxon>
        <taxon>Actinomycetota</taxon>
        <taxon>Actinomycetes</taxon>
        <taxon>Mycobacteriales</taxon>
        <taxon>Nocardiaceae</taxon>
        <taxon>Rhodococcus</taxon>
    </lineage>
</organism>
<keyword id="KW-0687">Ribonucleoprotein</keyword>
<keyword id="KW-0689">Ribosomal protein</keyword>
<keyword id="KW-0694">RNA-binding</keyword>
<keyword id="KW-0699">rRNA-binding</keyword>
<protein>
    <recommendedName>
        <fullName evidence="1">Large ribosomal subunit protein uL10</fullName>
    </recommendedName>
    <alternativeName>
        <fullName evidence="2">50S ribosomal protein L10</fullName>
    </alternativeName>
</protein>
<gene>
    <name evidence="1" type="primary">rplJ</name>
    <name type="ordered locus">ROP_16540</name>
</gene>
<dbReference type="EMBL" id="AP011115">
    <property type="protein sequence ID" value="BAH49901.1"/>
    <property type="molecule type" value="Genomic_DNA"/>
</dbReference>
<dbReference type="RefSeq" id="WP_005252102.1">
    <property type="nucleotide sequence ID" value="NC_012522.1"/>
</dbReference>
<dbReference type="SMR" id="C1AYX3"/>
<dbReference type="STRING" id="632772.ROP_16540"/>
<dbReference type="GeneID" id="69893669"/>
<dbReference type="KEGG" id="rop:ROP_16540"/>
<dbReference type="PATRIC" id="fig|632772.20.peg.1735"/>
<dbReference type="HOGENOM" id="CLU_092227_1_0_11"/>
<dbReference type="OrthoDB" id="3186107at2"/>
<dbReference type="Proteomes" id="UP000002212">
    <property type="component" value="Chromosome"/>
</dbReference>
<dbReference type="GO" id="GO:0015934">
    <property type="term" value="C:large ribosomal subunit"/>
    <property type="evidence" value="ECO:0007669"/>
    <property type="project" value="InterPro"/>
</dbReference>
<dbReference type="GO" id="GO:0070180">
    <property type="term" value="F:large ribosomal subunit rRNA binding"/>
    <property type="evidence" value="ECO:0007669"/>
    <property type="project" value="UniProtKB-UniRule"/>
</dbReference>
<dbReference type="GO" id="GO:0003735">
    <property type="term" value="F:structural constituent of ribosome"/>
    <property type="evidence" value="ECO:0007669"/>
    <property type="project" value="InterPro"/>
</dbReference>
<dbReference type="GO" id="GO:0006412">
    <property type="term" value="P:translation"/>
    <property type="evidence" value="ECO:0007669"/>
    <property type="project" value="UniProtKB-UniRule"/>
</dbReference>
<dbReference type="CDD" id="cd05797">
    <property type="entry name" value="Ribosomal_L10"/>
    <property type="match status" value="1"/>
</dbReference>
<dbReference type="Gene3D" id="3.30.70.1730">
    <property type="match status" value="1"/>
</dbReference>
<dbReference type="Gene3D" id="6.10.250.290">
    <property type="match status" value="1"/>
</dbReference>
<dbReference type="HAMAP" id="MF_00362">
    <property type="entry name" value="Ribosomal_uL10"/>
    <property type="match status" value="1"/>
</dbReference>
<dbReference type="InterPro" id="IPR001790">
    <property type="entry name" value="Ribosomal_uL10"/>
</dbReference>
<dbReference type="InterPro" id="IPR043141">
    <property type="entry name" value="Ribosomal_uL10-like_sf"/>
</dbReference>
<dbReference type="InterPro" id="IPR022973">
    <property type="entry name" value="Ribosomal_uL10_bac"/>
</dbReference>
<dbReference type="InterPro" id="IPR047865">
    <property type="entry name" value="Ribosomal_uL10_bac_type"/>
</dbReference>
<dbReference type="InterPro" id="IPR002363">
    <property type="entry name" value="Ribosomal_uL10_CS_bac"/>
</dbReference>
<dbReference type="NCBIfam" id="NF000955">
    <property type="entry name" value="PRK00099.1-1"/>
    <property type="match status" value="1"/>
</dbReference>
<dbReference type="PANTHER" id="PTHR11560">
    <property type="entry name" value="39S RIBOSOMAL PROTEIN L10, MITOCHONDRIAL"/>
    <property type="match status" value="1"/>
</dbReference>
<dbReference type="Pfam" id="PF00466">
    <property type="entry name" value="Ribosomal_L10"/>
    <property type="match status" value="1"/>
</dbReference>
<dbReference type="SUPFAM" id="SSF160369">
    <property type="entry name" value="Ribosomal protein L10-like"/>
    <property type="match status" value="1"/>
</dbReference>
<dbReference type="PROSITE" id="PS01109">
    <property type="entry name" value="RIBOSOMAL_L10"/>
    <property type="match status" value="1"/>
</dbReference>
<name>RL10_RHOOB</name>
<accession>C1AYX3</accession>